<name>MRAY_DEIDV</name>
<protein>
    <recommendedName>
        <fullName evidence="1">Phospho-N-acetylmuramoyl-pentapeptide-transferase</fullName>
        <ecNumber evidence="1">2.7.8.13</ecNumber>
    </recommendedName>
    <alternativeName>
        <fullName evidence="1">UDP-MurNAc-pentapeptide phosphotransferase</fullName>
    </alternativeName>
</protein>
<gene>
    <name evidence="1" type="primary">mraY</name>
    <name type="ordered locus">Deide_14680</name>
</gene>
<feature type="chain" id="PRO_1000202062" description="Phospho-N-acetylmuramoyl-pentapeptide-transferase">
    <location>
        <begin position="1"/>
        <end position="305"/>
    </location>
</feature>
<feature type="transmembrane region" description="Helical" evidence="1">
    <location>
        <begin position="1"/>
        <end position="21"/>
    </location>
</feature>
<feature type="transmembrane region" description="Helical" evidence="1">
    <location>
        <begin position="46"/>
        <end position="66"/>
    </location>
</feature>
<feature type="transmembrane region" description="Helical" evidence="1">
    <location>
        <begin position="73"/>
        <end position="93"/>
    </location>
</feature>
<feature type="transmembrane region" description="Helical" evidence="1">
    <location>
        <begin position="113"/>
        <end position="133"/>
    </location>
</feature>
<feature type="transmembrane region" description="Helical" evidence="1">
    <location>
        <begin position="139"/>
        <end position="159"/>
    </location>
</feature>
<feature type="transmembrane region" description="Helical" evidence="1">
    <location>
        <begin position="174"/>
        <end position="194"/>
    </location>
</feature>
<feature type="transmembrane region" description="Helical" evidence="1">
    <location>
        <begin position="207"/>
        <end position="227"/>
    </location>
</feature>
<feature type="transmembrane region" description="Helical" evidence="1">
    <location>
        <begin position="233"/>
        <end position="253"/>
    </location>
</feature>
<feature type="transmembrane region" description="Helical" evidence="1">
    <location>
        <begin position="282"/>
        <end position="302"/>
    </location>
</feature>
<reference key="1">
    <citation type="journal article" date="2009" name="PLoS Genet.">
        <title>Alliance of proteomics and genomics to unravel the specificities of Sahara bacterium Deinococcus deserti.</title>
        <authorList>
            <person name="de Groot A."/>
            <person name="Dulermo R."/>
            <person name="Ortet P."/>
            <person name="Blanchard L."/>
            <person name="Guerin P."/>
            <person name="Fernandez B."/>
            <person name="Vacherie B."/>
            <person name="Dossat C."/>
            <person name="Jolivet E."/>
            <person name="Siguier P."/>
            <person name="Chandler M."/>
            <person name="Barakat M."/>
            <person name="Dedieu A."/>
            <person name="Barbe V."/>
            <person name="Heulin T."/>
            <person name="Sommer S."/>
            <person name="Achouak W."/>
            <person name="Armengaud J."/>
        </authorList>
    </citation>
    <scope>NUCLEOTIDE SEQUENCE [LARGE SCALE GENOMIC DNA]</scope>
    <source>
        <strain>DSM 17065 / CIP 109153 / LMG 22923 / VCD115</strain>
    </source>
</reference>
<accession>C1CW54</accession>
<sequence>MLMVAALLSWFLVGLFIRASKARGWGQPVRKDGPQTHLVKEGTPTAGGVAFVLAMALVFFPLYLSGHAGGERELLIMLTALAMGVVGGVDDWLKIQSRMRGHGKKELLAREKFPLQFLVALVFAWLAAPLASHELVPSLGPVMDVVLIALVMVGSVNAFNFTDGLDGLLGGVAIIVLLPLLALSPVSALLVAVLLGFLWFNAHPARVFMGDMGSHAIGAVAAGAYILYADVWLLPIAAIIPVVAVLSVMIQVISFKTRGKRIFRMSPIQHHFELSGWPETHVTIRFWVITAVATAAVWWLLGARP</sequence>
<dbReference type="EC" id="2.7.8.13" evidence="1"/>
<dbReference type="EMBL" id="CP001114">
    <property type="protein sequence ID" value="ACO46421.1"/>
    <property type="molecule type" value="Genomic_DNA"/>
</dbReference>
<dbReference type="RefSeq" id="WP_012693544.1">
    <property type="nucleotide sequence ID" value="NC_012526.1"/>
</dbReference>
<dbReference type="SMR" id="C1CW54"/>
<dbReference type="STRING" id="546414.Deide_14680"/>
<dbReference type="PaxDb" id="546414-Deide_14680"/>
<dbReference type="KEGG" id="ddr:Deide_14680"/>
<dbReference type="eggNOG" id="COG0472">
    <property type="taxonomic scope" value="Bacteria"/>
</dbReference>
<dbReference type="HOGENOM" id="CLU_023982_0_1_0"/>
<dbReference type="OrthoDB" id="9805475at2"/>
<dbReference type="UniPathway" id="UPA00219"/>
<dbReference type="Proteomes" id="UP000002208">
    <property type="component" value="Chromosome"/>
</dbReference>
<dbReference type="GO" id="GO:0005886">
    <property type="term" value="C:plasma membrane"/>
    <property type="evidence" value="ECO:0007669"/>
    <property type="project" value="UniProtKB-SubCell"/>
</dbReference>
<dbReference type="GO" id="GO:0046872">
    <property type="term" value="F:metal ion binding"/>
    <property type="evidence" value="ECO:0007669"/>
    <property type="project" value="UniProtKB-KW"/>
</dbReference>
<dbReference type="GO" id="GO:0008963">
    <property type="term" value="F:phospho-N-acetylmuramoyl-pentapeptide-transferase activity"/>
    <property type="evidence" value="ECO:0007669"/>
    <property type="project" value="UniProtKB-UniRule"/>
</dbReference>
<dbReference type="GO" id="GO:0051992">
    <property type="term" value="F:UDP-N-acetylmuramoyl-L-alanyl-D-glutamyl-meso-2,6-diaminopimelyl-D-alanyl-D-alanine:undecaprenyl-phosphate transferase activity"/>
    <property type="evidence" value="ECO:0007669"/>
    <property type="project" value="RHEA"/>
</dbReference>
<dbReference type="GO" id="GO:0051301">
    <property type="term" value="P:cell division"/>
    <property type="evidence" value="ECO:0007669"/>
    <property type="project" value="UniProtKB-KW"/>
</dbReference>
<dbReference type="GO" id="GO:0071555">
    <property type="term" value="P:cell wall organization"/>
    <property type="evidence" value="ECO:0007669"/>
    <property type="project" value="UniProtKB-KW"/>
</dbReference>
<dbReference type="GO" id="GO:0009252">
    <property type="term" value="P:peptidoglycan biosynthetic process"/>
    <property type="evidence" value="ECO:0007669"/>
    <property type="project" value="UniProtKB-UniRule"/>
</dbReference>
<dbReference type="GO" id="GO:0008360">
    <property type="term" value="P:regulation of cell shape"/>
    <property type="evidence" value="ECO:0007669"/>
    <property type="project" value="UniProtKB-KW"/>
</dbReference>
<dbReference type="CDD" id="cd06852">
    <property type="entry name" value="GT_MraY"/>
    <property type="match status" value="1"/>
</dbReference>
<dbReference type="HAMAP" id="MF_00038">
    <property type="entry name" value="MraY"/>
    <property type="match status" value="1"/>
</dbReference>
<dbReference type="InterPro" id="IPR000715">
    <property type="entry name" value="Glycosyl_transferase_4"/>
</dbReference>
<dbReference type="InterPro" id="IPR003524">
    <property type="entry name" value="PNAcMuramoyl-5peptid_Trfase"/>
</dbReference>
<dbReference type="InterPro" id="IPR018480">
    <property type="entry name" value="PNAcMuramoyl-5peptid_Trfase_CS"/>
</dbReference>
<dbReference type="PANTHER" id="PTHR22926">
    <property type="entry name" value="PHOSPHO-N-ACETYLMURAMOYL-PENTAPEPTIDE-TRANSFERASE"/>
    <property type="match status" value="1"/>
</dbReference>
<dbReference type="PANTHER" id="PTHR22926:SF5">
    <property type="entry name" value="PHOSPHO-N-ACETYLMURAMOYL-PENTAPEPTIDE-TRANSFERASE HOMOLOG"/>
    <property type="match status" value="1"/>
</dbReference>
<dbReference type="Pfam" id="PF00953">
    <property type="entry name" value="Glycos_transf_4"/>
    <property type="match status" value="1"/>
</dbReference>
<dbReference type="PROSITE" id="PS01347">
    <property type="entry name" value="MRAY_1"/>
    <property type="match status" value="1"/>
</dbReference>
<dbReference type="PROSITE" id="PS01348">
    <property type="entry name" value="MRAY_2"/>
    <property type="match status" value="1"/>
</dbReference>
<evidence type="ECO:0000255" key="1">
    <source>
        <dbReference type="HAMAP-Rule" id="MF_00038"/>
    </source>
</evidence>
<proteinExistence type="inferred from homology"/>
<organism>
    <name type="scientific">Deinococcus deserti (strain DSM 17065 / CIP 109153 / LMG 22923 / VCD115)</name>
    <dbReference type="NCBI Taxonomy" id="546414"/>
    <lineage>
        <taxon>Bacteria</taxon>
        <taxon>Thermotogati</taxon>
        <taxon>Deinococcota</taxon>
        <taxon>Deinococci</taxon>
        <taxon>Deinococcales</taxon>
        <taxon>Deinococcaceae</taxon>
        <taxon>Deinococcus</taxon>
    </lineage>
</organism>
<keyword id="KW-0131">Cell cycle</keyword>
<keyword id="KW-0132">Cell division</keyword>
<keyword id="KW-1003">Cell membrane</keyword>
<keyword id="KW-0133">Cell shape</keyword>
<keyword id="KW-0961">Cell wall biogenesis/degradation</keyword>
<keyword id="KW-0460">Magnesium</keyword>
<keyword id="KW-0472">Membrane</keyword>
<keyword id="KW-0479">Metal-binding</keyword>
<keyword id="KW-0573">Peptidoglycan synthesis</keyword>
<keyword id="KW-1185">Reference proteome</keyword>
<keyword id="KW-0808">Transferase</keyword>
<keyword id="KW-0812">Transmembrane</keyword>
<keyword id="KW-1133">Transmembrane helix</keyword>
<comment type="function">
    <text evidence="1">Catalyzes the initial step of the lipid cycle reactions in the biosynthesis of the cell wall peptidoglycan: transfers peptidoglycan precursor phospho-MurNAc-pentapeptide from UDP-MurNAc-pentapeptide onto the lipid carrier undecaprenyl phosphate, yielding undecaprenyl-pyrophosphoryl-MurNAc-pentapeptide, known as lipid I.</text>
</comment>
<comment type="catalytic activity">
    <reaction evidence="1">
        <text>UDP-N-acetyl-alpha-D-muramoyl-L-alanyl-gamma-D-glutamyl-meso-2,6-diaminopimeloyl-D-alanyl-D-alanine + di-trans,octa-cis-undecaprenyl phosphate = di-trans,octa-cis-undecaprenyl diphospho-N-acetyl-alpha-D-muramoyl-L-alanyl-D-glutamyl-meso-2,6-diaminopimeloyl-D-alanyl-D-alanine + UMP</text>
        <dbReference type="Rhea" id="RHEA:28386"/>
        <dbReference type="ChEBI" id="CHEBI:57865"/>
        <dbReference type="ChEBI" id="CHEBI:60392"/>
        <dbReference type="ChEBI" id="CHEBI:61386"/>
        <dbReference type="ChEBI" id="CHEBI:61387"/>
        <dbReference type="EC" id="2.7.8.13"/>
    </reaction>
</comment>
<comment type="cofactor">
    <cofactor evidence="1">
        <name>Mg(2+)</name>
        <dbReference type="ChEBI" id="CHEBI:18420"/>
    </cofactor>
</comment>
<comment type="pathway">
    <text evidence="1">Cell wall biogenesis; peptidoglycan biosynthesis.</text>
</comment>
<comment type="subcellular location">
    <subcellularLocation>
        <location evidence="1">Cell membrane</location>
        <topology evidence="1">Multi-pass membrane protein</topology>
    </subcellularLocation>
</comment>
<comment type="similarity">
    <text evidence="1">Belongs to the glycosyltransferase 4 family. MraY subfamily.</text>
</comment>